<name>CREA_ECO57</name>
<organism>
    <name type="scientific">Escherichia coli O157:H7</name>
    <dbReference type="NCBI Taxonomy" id="83334"/>
    <lineage>
        <taxon>Bacteria</taxon>
        <taxon>Pseudomonadati</taxon>
        <taxon>Pseudomonadota</taxon>
        <taxon>Gammaproteobacteria</taxon>
        <taxon>Enterobacterales</taxon>
        <taxon>Enterobacteriaceae</taxon>
        <taxon>Escherichia</taxon>
    </lineage>
</organism>
<gene>
    <name type="primary">creA</name>
    <name type="ordered locus">Z6000</name>
    <name type="ordered locus">ECs5355</name>
</gene>
<dbReference type="EMBL" id="AE005174">
    <property type="protein sequence ID" value="AAG59577.1"/>
    <property type="molecule type" value="Genomic_DNA"/>
</dbReference>
<dbReference type="EMBL" id="BA000007">
    <property type="protein sequence ID" value="BAB38778.1"/>
    <property type="molecule type" value="Genomic_DNA"/>
</dbReference>
<dbReference type="PIR" id="C91298">
    <property type="entry name" value="C91298"/>
</dbReference>
<dbReference type="PIR" id="E86139">
    <property type="entry name" value="E86139"/>
</dbReference>
<dbReference type="RefSeq" id="NP_313382.1">
    <property type="nucleotide sequence ID" value="NC_002695.1"/>
</dbReference>
<dbReference type="RefSeq" id="WP_000875487.1">
    <property type="nucleotide sequence ID" value="NZ_VOAI01000002.1"/>
</dbReference>
<dbReference type="STRING" id="155864.Z6000"/>
<dbReference type="GeneID" id="913485"/>
<dbReference type="GeneID" id="93777448"/>
<dbReference type="KEGG" id="ece:Z6000"/>
<dbReference type="KEGG" id="ecs:ECs_5355"/>
<dbReference type="PATRIC" id="fig|386585.9.peg.5603"/>
<dbReference type="eggNOG" id="COG3045">
    <property type="taxonomic scope" value="Bacteria"/>
</dbReference>
<dbReference type="HOGENOM" id="CLU_109726_1_1_6"/>
<dbReference type="OMA" id="QGVTCYV"/>
<dbReference type="Proteomes" id="UP000000558">
    <property type="component" value="Chromosome"/>
</dbReference>
<dbReference type="Proteomes" id="UP000002519">
    <property type="component" value="Chromosome"/>
</dbReference>
<dbReference type="GO" id="GO:0005829">
    <property type="term" value="C:cytosol"/>
    <property type="evidence" value="ECO:0007669"/>
    <property type="project" value="TreeGrafter"/>
</dbReference>
<dbReference type="InterPro" id="IPR010292">
    <property type="entry name" value="Uncharacterised_CreA"/>
</dbReference>
<dbReference type="NCBIfam" id="NF008026">
    <property type="entry name" value="PRK10756.1"/>
    <property type="match status" value="1"/>
</dbReference>
<dbReference type="PANTHER" id="PTHR37952">
    <property type="match status" value="1"/>
</dbReference>
<dbReference type="PANTHER" id="PTHR37952:SF2">
    <property type="entry name" value="PROTEIN CREA"/>
    <property type="match status" value="1"/>
</dbReference>
<dbReference type="Pfam" id="PF05981">
    <property type="entry name" value="CreA"/>
    <property type="match status" value="1"/>
</dbReference>
<dbReference type="PIRSF" id="PIRSF003174">
    <property type="entry name" value="CreA"/>
    <property type="match status" value="1"/>
</dbReference>
<accession>P0AE93</accession>
<accession>P08367</accession>
<sequence>MKYKHLILSLSLIMLGPLAHAEEIGSVDTVFKMIGPDHKIVVEAFDDPDVKNVTCYVSRAKTGGIKGGLGLAEDTSDAAISCQQVGPIELSDRIKNGKAQGEVVFKKRTSLVFKSLQVVRFYDAKRNALAYLAYSDKVVEGSPKNAISAVPVMPWRQ</sequence>
<keyword id="KW-1185">Reference proteome</keyword>
<keyword id="KW-0732">Signal</keyword>
<proteinExistence type="inferred from homology"/>
<feature type="signal peptide" evidence="1">
    <location>
        <begin position="1"/>
        <end position="21"/>
    </location>
</feature>
<feature type="chain" id="PRO_0000079340" description="Protein CreA">
    <location>
        <begin position="22"/>
        <end position="157"/>
    </location>
</feature>
<reference key="1">
    <citation type="journal article" date="2001" name="Nature">
        <title>Genome sequence of enterohaemorrhagic Escherichia coli O157:H7.</title>
        <authorList>
            <person name="Perna N.T."/>
            <person name="Plunkett G. III"/>
            <person name="Burland V."/>
            <person name="Mau B."/>
            <person name="Glasner J.D."/>
            <person name="Rose D.J."/>
            <person name="Mayhew G.F."/>
            <person name="Evans P.S."/>
            <person name="Gregor J."/>
            <person name="Kirkpatrick H.A."/>
            <person name="Posfai G."/>
            <person name="Hackett J."/>
            <person name="Klink S."/>
            <person name="Boutin A."/>
            <person name="Shao Y."/>
            <person name="Miller L."/>
            <person name="Grotbeck E.J."/>
            <person name="Davis N.W."/>
            <person name="Lim A."/>
            <person name="Dimalanta E.T."/>
            <person name="Potamousis K."/>
            <person name="Apodaca J."/>
            <person name="Anantharaman T.S."/>
            <person name="Lin J."/>
            <person name="Yen G."/>
            <person name="Schwartz D.C."/>
            <person name="Welch R.A."/>
            <person name="Blattner F.R."/>
        </authorList>
    </citation>
    <scope>NUCLEOTIDE SEQUENCE [LARGE SCALE GENOMIC DNA]</scope>
    <source>
        <strain>O157:H7 / EDL933 / ATCC 700927 / EHEC</strain>
    </source>
</reference>
<reference key="2">
    <citation type="journal article" date="2001" name="DNA Res.">
        <title>Complete genome sequence of enterohemorrhagic Escherichia coli O157:H7 and genomic comparison with a laboratory strain K-12.</title>
        <authorList>
            <person name="Hayashi T."/>
            <person name="Makino K."/>
            <person name="Ohnishi M."/>
            <person name="Kurokawa K."/>
            <person name="Ishii K."/>
            <person name="Yokoyama K."/>
            <person name="Han C.-G."/>
            <person name="Ohtsubo E."/>
            <person name="Nakayama K."/>
            <person name="Murata T."/>
            <person name="Tanaka M."/>
            <person name="Tobe T."/>
            <person name="Iida T."/>
            <person name="Takami H."/>
            <person name="Honda T."/>
            <person name="Sasakawa C."/>
            <person name="Ogasawara N."/>
            <person name="Yasunaga T."/>
            <person name="Kuhara S."/>
            <person name="Shiba T."/>
            <person name="Hattori M."/>
            <person name="Shinagawa H."/>
        </authorList>
    </citation>
    <scope>NUCLEOTIDE SEQUENCE [LARGE SCALE GENOMIC DNA]</scope>
    <source>
        <strain>O157:H7 / Sakai / RIMD 0509952 / EHEC</strain>
    </source>
</reference>
<evidence type="ECO:0000255" key="1"/>
<protein>
    <recommendedName>
        <fullName>Protein CreA</fullName>
    </recommendedName>
    <alternativeName>
        <fullName>Catabolite regulation protein A</fullName>
    </alternativeName>
</protein>